<comment type="function">
    <text evidence="1">Modulates exocytosis of dense-core granules and secretion of hormones in the pancreas and the pituitary. Interacts with vesicles containing negatively charged phospholipids in a Ca(2+)-independent manner (By similarity).</text>
</comment>
<comment type="subunit">
    <text evidence="1">Part of a ternary complex containing STX1A and RAB27A. Can bind both dominant negative and dominant active mutants of RAB27A. Binds STXBP1, RAB3A, RAB8A and RAB27B. Interacts with MYO5A (By similarity).</text>
</comment>
<comment type="subcellular location">
    <subcellularLocation>
        <location evidence="7">Membrane</location>
        <topology evidence="7">Peripheral membrane protein</topology>
    </subcellularLocation>
    <subcellularLocation>
        <location evidence="7">Cytoplasmic vesicle</location>
        <location evidence="7">Secretory vesicle membrane</location>
        <topology evidence="7">Peripheral membrane protein</topology>
    </subcellularLocation>
    <text>Detected close to the plasma membrane and on secretory granules. In pancreas, interacts with insulin-containing vesicles.</text>
</comment>
<comment type="alternative products">
    <event type="alternative splicing"/>
    <isoform>
        <id>Q8VHQ7-1</id>
        <name>1</name>
        <name>Granuphilin-a</name>
        <sequence type="displayed"/>
    </isoform>
    <isoform>
        <id>Q8VHQ7-2</id>
        <name>2</name>
        <name>Granuphilin-b</name>
        <sequence type="described" ref="VSP_007903 VSP_007904"/>
    </isoform>
</comment>
<comment type="tissue specificity">
    <text>Detected in insulin-secreting cell lines.</text>
</comment>
<sequence length="672" mass="75900">MSEILDLSFLSEMERDLILSVLQRDEELRKADEKRIRRLKNELLEIKRKGAKRGSQHYSDRTCARCQEGLGRLISKSNTCVGCNHLVCRECRVLESNGSWRCKVCSKEIELKKATGDWFYDQKVNRFAYRTGSDIIRMSLRRKPAVNKRETVGQSLLQQTQMGDIWPGRRIIQEQQKEQSVLFEVPKLKSGKSALEAESESLDSYTADSDSTSRRDSLDKSGLFPEWKKMSAPKSQVEKEIAPGNQNAVCGDEGDMIFKKNTRKVLRPSEYTKSVIDLRPEDVAQESGILGDRSKSVPGLSVDMEDEEEEEEDIDHLVKLHRQKLARGSMQSGSSMSTIGSMMSLYSEAGDFGNVSVTGKIAFSLKFEQKTQTLVIHVKECHQLAYADEAKKRSNPYVKTYLLPDKSRQGKRKTSIKRDTINPLYDETFRYEISESLLAQRTLQFSVWHHGRFGRNTFLGEAEVHMDSWKLDKKLDHCLPLHGKISTESSPGLPAHKGELVVSLKYIPASKLPVGGDRKKSKGGEGGELQVWIKEAKNLTAAKSGGTSDSFVKGYLLPMRNKASKRKTPVMKKTLNPHYNHTFVYNGVRLEDLQHMCLELTVWDREPLASNDFLGGVRLGVGTGISSGEVVDWMDSTGEEVSLWQKMRQYPGSWAEGTLQLRSSMVKQKLGV</sequence>
<gene>
    <name type="primary">Sytl4</name>
</gene>
<organism>
    <name type="scientific">Rattus norvegicus</name>
    <name type="common">Rat</name>
    <dbReference type="NCBI Taxonomy" id="10116"/>
    <lineage>
        <taxon>Eukaryota</taxon>
        <taxon>Metazoa</taxon>
        <taxon>Chordata</taxon>
        <taxon>Craniata</taxon>
        <taxon>Vertebrata</taxon>
        <taxon>Euteleostomi</taxon>
        <taxon>Mammalia</taxon>
        <taxon>Eutheria</taxon>
        <taxon>Euarchontoglires</taxon>
        <taxon>Glires</taxon>
        <taxon>Rodentia</taxon>
        <taxon>Myomorpha</taxon>
        <taxon>Muroidea</taxon>
        <taxon>Muridae</taxon>
        <taxon>Murinae</taxon>
        <taxon>Rattus</taxon>
    </lineage>
</organism>
<dbReference type="EMBL" id="AF419341">
    <property type="protein sequence ID" value="AAL38513.1"/>
    <property type="molecule type" value="mRNA"/>
</dbReference>
<dbReference type="EMBL" id="AF419342">
    <property type="protein sequence ID" value="AAL38514.1"/>
    <property type="molecule type" value="mRNA"/>
</dbReference>
<dbReference type="RefSeq" id="NP_536335.1">
    <property type="nucleotide sequence ID" value="NM_080410.1"/>
</dbReference>
<dbReference type="SMR" id="Q8VHQ7"/>
<dbReference type="BioGRID" id="250808">
    <property type="interactions" value="2"/>
</dbReference>
<dbReference type="FunCoup" id="Q8VHQ7">
    <property type="interactions" value="183"/>
</dbReference>
<dbReference type="IntAct" id="Q8VHQ7">
    <property type="interactions" value="1"/>
</dbReference>
<dbReference type="STRING" id="10116.ENSRNOP00000004909"/>
<dbReference type="CarbonylDB" id="Q8VHQ7"/>
<dbReference type="iPTMnet" id="Q8VHQ7"/>
<dbReference type="PhosphoSitePlus" id="Q8VHQ7"/>
<dbReference type="jPOST" id="Q8VHQ7"/>
<dbReference type="PaxDb" id="10116-ENSRNOP00000004909"/>
<dbReference type="GeneID" id="140594"/>
<dbReference type="KEGG" id="rno:140594"/>
<dbReference type="UCSC" id="RGD:620204">
    <molecule id="Q8VHQ7-1"/>
    <property type="organism name" value="rat"/>
</dbReference>
<dbReference type="AGR" id="RGD:620204"/>
<dbReference type="CTD" id="94121"/>
<dbReference type="RGD" id="620204">
    <property type="gene designation" value="Sytl4"/>
</dbReference>
<dbReference type="eggNOG" id="KOG1028">
    <property type="taxonomic scope" value="Eukaryota"/>
</dbReference>
<dbReference type="InParanoid" id="Q8VHQ7"/>
<dbReference type="PhylomeDB" id="Q8VHQ7"/>
<dbReference type="Reactome" id="R-RNO-114608">
    <property type="pathway name" value="Platelet degranulation"/>
</dbReference>
<dbReference type="PRO" id="PR:Q8VHQ7"/>
<dbReference type="Proteomes" id="UP000002494">
    <property type="component" value="Unplaced"/>
</dbReference>
<dbReference type="GO" id="GO:0016324">
    <property type="term" value="C:apical plasma membrane"/>
    <property type="evidence" value="ECO:0000314"/>
    <property type="project" value="RGD"/>
</dbReference>
<dbReference type="GO" id="GO:0005768">
    <property type="term" value="C:endosome"/>
    <property type="evidence" value="ECO:0000266"/>
    <property type="project" value="RGD"/>
</dbReference>
<dbReference type="GO" id="GO:0070382">
    <property type="term" value="C:exocytic vesicle"/>
    <property type="evidence" value="ECO:0000318"/>
    <property type="project" value="GO_Central"/>
</dbReference>
<dbReference type="GO" id="GO:0005886">
    <property type="term" value="C:plasma membrane"/>
    <property type="evidence" value="ECO:0000250"/>
    <property type="project" value="UniProtKB"/>
</dbReference>
<dbReference type="GO" id="GO:0030141">
    <property type="term" value="C:secretory granule"/>
    <property type="evidence" value="ECO:0000266"/>
    <property type="project" value="RGD"/>
</dbReference>
<dbReference type="GO" id="GO:0030658">
    <property type="term" value="C:transport vesicle membrane"/>
    <property type="evidence" value="ECO:0007669"/>
    <property type="project" value="UniProtKB-SubCell"/>
</dbReference>
<dbReference type="GO" id="GO:0042043">
    <property type="term" value="F:neurexin family protein binding"/>
    <property type="evidence" value="ECO:0000250"/>
    <property type="project" value="UniProtKB"/>
</dbReference>
<dbReference type="GO" id="GO:0005543">
    <property type="term" value="F:phospholipid binding"/>
    <property type="evidence" value="ECO:0000250"/>
    <property type="project" value="UniProtKB"/>
</dbReference>
<dbReference type="GO" id="GO:0031267">
    <property type="term" value="F:small GTPase binding"/>
    <property type="evidence" value="ECO:0007669"/>
    <property type="project" value="InterPro"/>
</dbReference>
<dbReference type="GO" id="GO:0008270">
    <property type="term" value="F:zinc ion binding"/>
    <property type="evidence" value="ECO:0007669"/>
    <property type="project" value="UniProtKB-KW"/>
</dbReference>
<dbReference type="GO" id="GO:0006887">
    <property type="term" value="P:exocytosis"/>
    <property type="evidence" value="ECO:0000250"/>
    <property type="project" value="UniProtKB"/>
</dbReference>
<dbReference type="GO" id="GO:0030073">
    <property type="term" value="P:insulin secretion"/>
    <property type="evidence" value="ECO:0000266"/>
    <property type="project" value="RGD"/>
</dbReference>
<dbReference type="GO" id="GO:0006886">
    <property type="term" value="P:intracellular protein transport"/>
    <property type="evidence" value="ECO:0007669"/>
    <property type="project" value="InterPro"/>
</dbReference>
<dbReference type="GO" id="GO:0032418">
    <property type="term" value="P:lysosome localization"/>
    <property type="evidence" value="ECO:0000266"/>
    <property type="project" value="RGD"/>
</dbReference>
<dbReference type="GO" id="GO:0071985">
    <property type="term" value="P:multivesicular body sorting pathway"/>
    <property type="evidence" value="ECO:0000266"/>
    <property type="project" value="RGD"/>
</dbReference>
<dbReference type="GO" id="GO:0046676">
    <property type="term" value="P:negative regulation of insulin secretion"/>
    <property type="evidence" value="ECO:0000266"/>
    <property type="project" value="RGD"/>
</dbReference>
<dbReference type="GO" id="GO:0001778">
    <property type="term" value="P:plasma membrane repair"/>
    <property type="evidence" value="ECO:0000266"/>
    <property type="project" value="RGD"/>
</dbReference>
<dbReference type="GO" id="GO:0045921">
    <property type="term" value="P:positive regulation of exocytosis"/>
    <property type="evidence" value="ECO:0000266"/>
    <property type="project" value="RGD"/>
</dbReference>
<dbReference type="GO" id="GO:0050714">
    <property type="term" value="P:positive regulation of protein secretion"/>
    <property type="evidence" value="ECO:0000266"/>
    <property type="project" value="RGD"/>
</dbReference>
<dbReference type="GO" id="GO:1905684">
    <property type="term" value="P:regulation of plasma membrane repair"/>
    <property type="evidence" value="ECO:0000266"/>
    <property type="project" value="RGD"/>
</dbReference>
<dbReference type="CDD" id="cd04029">
    <property type="entry name" value="C2A_SLP-4_5"/>
    <property type="match status" value="1"/>
</dbReference>
<dbReference type="CDD" id="cd04020">
    <property type="entry name" value="C2B_SLP_1-2-3-4"/>
    <property type="match status" value="1"/>
</dbReference>
<dbReference type="CDD" id="cd15764">
    <property type="entry name" value="FYVE_Slp4"/>
    <property type="match status" value="1"/>
</dbReference>
<dbReference type="FunFam" id="2.60.40.150:FF:000121">
    <property type="entry name" value="Synaptotagmin-like 4, isoform CRA_a"/>
    <property type="match status" value="1"/>
</dbReference>
<dbReference type="FunFam" id="2.60.40.150:FF:000006">
    <property type="entry name" value="Synaptotagmin-like 5, isoform CRA_a"/>
    <property type="match status" value="1"/>
</dbReference>
<dbReference type="FunFam" id="3.30.40.10:FF:000018">
    <property type="entry name" value="Synaptotagmin-like 5, isoform CRA_a"/>
    <property type="match status" value="1"/>
</dbReference>
<dbReference type="Gene3D" id="2.60.40.150">
    <property type="entry name" value="C2 domain"/>
    <property type="match status" value="2"/>
</dbReference>
<dbReference type="Gene3D" id="3.30.40.10">
    <property type="entry name" value="Zinc/RING finger domain, C3HC4 (zinc finger)"/>
    <property type="match status" value="1"/>
</dbReference>
<dbReference type="InterPro" id="IPR000008">
    <property type="entry name" value="C2_dom"/>
</dbReference>
<dbReference type="InterPro" id="IPR035892">
    <property type="entry name" value="C2_domain_sf"/>
</dbReference>
<dbReference type="InterPro" id="IPR041282">
    <property type="entry name" value="FYVE_2"/>
</dbReference>
<dbReference type="InterPro" id="IPR044134">
    <property type="entry name" value="FYVE_Slp4"/>
</dbReference>
<dbReference type="InterPro" id="IPR010911">
    <property type="entry name" value="Rab_BD"/>
</dbReference>
<dbReference type="InterPro" id="IPR037303">
    <property type="entry name" value="SLP-4/5_C2A"/>
</dbReference>
<dbReference type="InterPro" id="IPR043567">
    <property type="entry name" value="SYTL1-5_C2B"/>
</dbReference>
<dbReference type="InterPro" id="IPR011011">
    <property type="entry name" value="Znf_FYVE_PHD"/>
</dbReference>
<dbReference type="InterPro" id="IPR013083">
    <property type="entry name" value="Znf_RING/FYVE/PHD"/>
</dbReference>
<dbReference type="PANTHER" id="PTHR45716">
    <property type="entry name" value="BITESIZE, ISOFORM I"/>
    <property type="match status" value="1"/>
</dbReference>
<dbReference type="PANTHER" id="PTHR45716:SF4">
    <property type="entry name" value="SYNAPTOTAGMIN-LIKE PROTEIN 4"/>
    <property type="match status" value="1"/>
</dbReference>
<dbReference type="Pfam" id="PF00168">
    <property type="entry name" value="C2"/>
    <property type="match status" value="2"/>
</dbReference>
<dbReference type="Pfam" id="PF02318">
    <property type="entry name" value="FYVE_2"/>
    <property type="match status" value="1"/>
</dbReference>
<dbReference type="SMART" id="SM00239">
    <property type="entry name" value="C2"/>
    <property type="match status" value="2"/>
</dbReference>
<dbReference type="SUPFAM" id="SSF49562">
    <property type="entry name" value="C2 domain (Calcium/lipid-binding domain, CaLB)"/>
    <property type="match status" value="2"/>
</dbReference>
<dbReference type="SUPFAM" id="SSF57903">
    <property type="entry name" value="FYVE/PHD zinc finger"/>
    <property type="match status" value="1"/>
</dbReference>
<dbReference type="PROSITE" id="PS50004">
    <property type="entry name" value="C2"/>
    <property type="match status" value="2"/>
</dbReference>
<dbReference type="PROSITE" id="PS50916">
    <property type="entry name" value="RABBD"/>
    <property type="match status" value="1"/>
</dbReference>
<keyword id="KW-0025">Alternative splicing</keyword>
<keyword id="KW-0968">Cytoplasmic vesicle</keyword>
<keyword id="KW-0472">Membrane</keyword>
<keyword id="KW-0479">Metal-binding</keyword>
<keyword id="KW-0597">Phosphoprotein</keyword>
<keyword id="KW-1185">Reference proteome</keyword>
<keyword id="KW-0677">Repeat</keyword>
<keyword id="KW-0862">Zinc</keyword>
<keyword id="KW-0863">Zinc-finger</keyword>
<proteinExistence type="evidence at protein level"/>
<protein>
    <recommendedName>
        <fullName>Synaptotagmin-like protein 4</fullName>
    </recommendedName>
    <alternativeName>
        <fullName>Exophilin-2</fullName>
    </alternativeName>
    <alternativeName>
        <fullName>Granuphilin</fullName>
    </alternativeName>
</protein>
<feature type="chain" id="PRO_0000190218" description="Synaptotagmin-like protein 4">
    <location>
        <begin position="1"/>
        <end position="672"/>
    </location>
</feature>
<feature type="domain" description="RabBD" evidence="5">
    <location>
        <begin position="4"/>
        <end position="122"/>
    </location>
</feature>
<feature type="domain" description="C2 1" evidence="4">
    <location>
        <begin position="357"/>
        <end position="479"/>
    </location>
</feature>
<feature type="domain" description="C2 2" evidence="4">
    <location>
        <begin position="508"/>
        <end position="634"/>
    </location>
</feature>
<feature type="zinc finger region" description="FYVE-type">
    <location>
        <begin position="63"/>
        <end position="105"/>
    </location>
</feature>
<feature type="region of interest" description="Disordered" evidence="6">
    <location>
        <begin position="199"/>
        <end position="222"/>
    </location>
</feature>
<feature type="modified residue" description="Phosphoserine" evidence="3">
    <location>
        <position position="201"/>
    </location>
</feature>
<feature type="modified residue" description="Phosphoserine" evidence="2">
    <location>
        <position position="204"/>
    </location>
</feature>
<feature type="modified residue" description="Phosphoserine" evidence="9">
    <location>
        <position position="217"/>
    </location>
</feature>
<feature type="modified residue" description="Phosphoserine" evidence="2">
    <location>
        <position position="221"/>
    </location>
</feature>
<feature type="modified residue" description="Phosphoserine" evidence="9">
    <location>
        <position position="274"/>
    </location>
</feature>
<feature type="modified residue" description="Phosphoserine" evidence="2">
    <location>
        <position position="489"/>
    </location>
</feature>
<feature type="splice variant" id="VSP_007903" description="In isoform 2." evidence="8">
    <original>ISTESSPGLPAHKGELV</original>
    <variation>GSVVAKWWTGWIRLVKK</variation>
    <location>
        <begin position="485"/>
        <end position="501"/>
    </location>
</feature>
<feature type="splice variant" id="VSP_007904" description="In isoform 2." evidence="8">
    <location>
        <begin position="502"/>
        <end position="672"/>
    </location>
</feature>
<feature type="mutagenesis site" description="Strongly reduces interaction with RAB3A and modulation of exocytosis." evidence="7">
    <original>V</original>
    <variation>A</variation>
    <location>
        <position position="21"/>
    </location>
</feature>
<feature type="mutagenesis site" description="Strongly reduces interaction with RAB3A and modulation of exocytosis." evidence="7">
    <original>L</original>
    <variation>A</variation>
    <location>
        <position position="43"/>
    </location>
</feature>
<evidence type="ECO:0000250" key="1"/>
<evidence type="ECO:0000250" key="2">
    <source>
        <dbReference type="UniProtKB" id="Q96C24"/>
    </source>
</evidence>
<evidence type="ECO:0000250" key="3">
    <source>
        <dbReference type="UniProtKB" id="Q9R0Q1"/>
    </source>
</evidence>
<evidence type="ECO:0000255" key="4">
    <source>
        <dbReference type="PROSITE-ProRule" id="PRU00041"/>
    </source>
</evidence>
<evidence type="ECO:0000255" key="5">
    <source>
        <dbReference type="PROSITE-ProRule" id="PRU00234"/>
    </source>
</evidence>
<evidence type="ECO:0000256" key="6">
    <source>
        <dbReference type="SAM" id="MobiDB-lite"/>
    </source>
</evidence>
<evidence type="ECO:0000269" key="7">
    <source>
    </source>
</evidence>
<evidence type="ECO:0000303" key="8">
    <source>
    </source>
</evidence>
<evidence type="ECO:0007744" key="9">
    <source>
    </source>
</evidence>
<reference key="1">
    <citation type="journal article" date="2002" name="Mol. Biol. Cell">
        <title>Pancreatic beta-cell protein granuphilin binds Rab3 and Munc-18 and controls exocytosis.</title>
        <authorList>
            <person name="Coppola T."/>
            <person name="Frantz C."/>
            <person name="Perret-Menoud V."/>
            <person name="Gattesco S."/>
            <person name="Hirling H."/>
            <person name="Regazzi R."/>
        </authorList>
    </citation>
    <scope>NUCLEOTIDE SEQUENCE [MRNA] (ISOFORMS 1 AND 2)</scope>
    <scope>MUTAGENESIS OF VAL-21 AND LEU-43</scope>
    <scope>INTERACTION WITH RAB3A AND STXBP1</scope>
    <scope>SUBCELLULAR LOCATION</scope>
    <source>
        <tissue>Insulinoma</tissue>
    </source>
</reference>
<reference key="2">
    <citation type="journal article" date="2012" name="Nat. Commun.">
        <title>Quantitative maps of protein phosphorylation sites across 14 different rat organs and tissues.</title>
        <authorList>
            <person name="Lundby A."/>
            <person name="Secher A."/>
            <person name="Lage K."/>
            <person name="Nordsborg N.B."/>
            <person name="Dmytriyev A."/>
            <person name="Lundby C."/>
            <person name="Olsen J.V."/>
        </authorList>
    </citation>
    <scope>PHOSPHORYLATION [LARGE SCALE ANALYSIS] AT SER-217 AND SER-274</scope>
    <scope>IDENTIFICATION BY MASS SPECTROMETRY [LARGE SCALE ANALYSIS]</scope>
</reference>
<name>SYTL4_RAT</name>
<accession>Q8VHQ7</accession>
<accession>Q8VHQ6</accession>